<proteinExistence type="inferred from homology"/>
<feature type="chain" id="PRO_0000269897" description="NADH-ubiquinone oxidoreductase chain 5">
    <location>
        <begin position="1"/>
        <end position="606"/>
    </location>
</feature>
<feature type="transmembrane region" description="Helical" evidence="3">
    <location>
        <begin position="1"/>
        <end position="21"/>
    </location>
</feature>
<feature type="transmembrane region" description="Helical" evidence="3">
    <location>
        <begin position="43"/>
        <end position="63"/>
    </location>
</feature>
<feature type="transmembrane region" description="Helical" evidence="3">
    <location>
        <begin position="87"/>
        <end position="107"/>
    </location>
</feature>
<feature type="transmembrane region" description="Helical" evidence="3">
    <location>
        <begin position="117"/>
        <end position="137"/>
    </location>
</feature>
<feature type="transmembrane region" description="Helical" evidence="3">
    <location>
        <begin position="140"/>
        <end position="160"/>
    </location>
</feature>
<feature type="transmembrane region" description="Helical" evidence="3">
    <location>
        <begin position="171"/>
        <end position="191"/>
    </location>
</feature>
<feature type="transmembrane region" description="Helical" evidence="3">
    <location>
        <begin position="241"/>
        <end position="261"/>
    </location>
</feature>
<feature type="transmembrane region" description="Helical" evidence="3">
    <location>
        <begin position="273"/>
        <end position="293"/>
    </location>
</feature>
<feature type="transmembrane region" description="Helical" evidence="3">
    <location>
        <begin position="310"/>
        <end position="330"/>
    </location>
</feature>
<feature type="transmembrane region" description="Helical" evidence="3">
    <location>
        <begin position="365"/>
        <end position="385"/>
    </location>
</feature>
<feature type="transmembrane region" description="Helical" evidence="3">
    <location>
        <begin position="409"/>
        <end position="429"/>
    </location>
</feature>
<feature type="transmembrane region" description="Helical" evidence="3">
    <location>
        <begin position="457"/>
        <end position="477"/>
    </location>
</feature>
<feature type="transmembrane region" description="Helical" evidence="3">
    <location>
        <begin position="488"/>
        <end position="508"/>
    </location>
</feature>
<feature type="transmembrane region" description="Helical" evidence="3">
    <location>
        <begin position="582"/>
        <end position="602"/>
    </location>
</feature>
<feature type="sequence variant" evidence="4">
    <original>S</original>
    <variation>A</variation>
    <location>
        <position position="77"/>
    </location>
</feature>
<feature type="sequence variant" evidence="4">
    <original>S</original>
    <variation>F</variation>
    <location>
        <position position="77"/>
    </location>
</feature>
<feature type="sequence variant" evidence="4">
    <original>N</original>
    <variation>S</variation>
    <location>
        <position position="208"/>
    </location>
</feature>
<feature type="sequence variant" evidence="4">
    <original>F</original>
    <variation>L</variation>
    <location>
        <position position="209"/>
    </location>
</feature>
<feature type="sequence variant" evidence="4">
    <original>T</original>
    <variation>I</variation>
    <location>
        <position position="371"/>
    </location>
</feature>
<feature type="sequence variant" evidence="4">
    <original>I</original>
    <variation>V</variation>
    <location>
        <position position="375"/>
    </location>
</feature>
<feature type="sequence variant" evidence="4">
    <original>L</original>
    <variation>H</variation>
    <location>
        <position position="442"/>
    </location>
</feature>
<feature type="sequence variant" evidence="4">
    <original>T</original>
    <variation>M</variation>
    <location>
        <position position="489"/>
    </location>
</feature>
<feature type="sequence variant" evidence="4">
    <original>I</original>
    <variation>M</variation>
    <location>
        <position position="495"/>
    </location>
</feature>
<name>NU5M_CANLU</name>
<reference key="1">
    <citation type="journal article" date="2005" name="Mol. Phylogenet. Evol.">
        <title>A phylogeny of the Caniformia (order Carnivora) based on 12 complete protein-coding mitochondrial genes.</title>
        <authorList>
            <person name="Delisle I."/>
            <person name="Strobeck C."/>
        </authorList>
    </citation>
    <scope>NUCLEOTIDE SEQUENCE [GENOMIC DNA]</scope>
</reference>
<reference key="2">
    <citation type="journal article" date="2006" name="Genome Res.">
        <title>Relaxation of selective constraint on dog mitochondrial DNA following domestication.</title>
        <authorList>
            <person name="Bjornerfeldt S."/>
            <person name="Webster M.T."/>
            <person name="Vila C."/>
        </authorList>
    </citation>
    <scope>NUCLEOTIDE SEQUENCE [GENOMIC DNA]</scope>
    <scope>VARIANTS ALA-77; PHE-77; SER-208; LEU-209; ILE-371; VAL-375; HIS-442; MET-489 AND MET-495</scope>
</reference>
<organism>
    <name type="scientific">Canis lupus</name>
    <name type="common">Gray wolf</name>
    <dbReference type="NCBI Taxonomy" id="9612"/>
    <lineage>
        <taxon>Eukaryota</taxon>
        <taxon>Metazoa</taxon>
        <taxon>Chordata</taxon>
        <taxon>Craniata</taxon>
        <taxon>Vertebrata</taxon>
        <taxon>Euteleostomi</taxon>
        <taxon>Mammalia</taxon>
        <taxon>Eutheria</taxon>
        <taxon>Laurasiatheria</taxon>
        <taxon>Carnivora</taxon>
        <taxon>Caniformia</taxon>
        <taxon>Canidae</taxon>
        <taxon>Canis</taxon>
    </lineage>
</organism>
<gene>
    <name type="primary">MT-ND5</name>
    <name type="synonym">MTND5</name>
    <name type="synonym">NADH5</name>
    <name type="synonym">ND5</name>
</gene>
<keyword id="KW-0249">Electron transport</keyword>
<keyword id="KW-0472">Membrane</keyword>
<keyword id="KW-0496">Mitochondrion</keyword>
<keyword id="KW-0999">Mitochondrion inner membrane</keyword>
<keyword id="KW-0520">NAD</keyword>
<keyword id="KW-0679">Respiratory chain</keyword>
<keyword id="KW-1278">Translocase</keyword>
<keyword id="KW-0812">Transmembrane</keyword>
<keyword id="KW-1133">Transmembrane helix</keyword>
<keyword id="KW-0813">Transport</keyword>
<keyword id="KW-0830">Ubiquinone</keyword>
<accession>Q1HK80</accession>
<accession>Q1HKA6</accession>
<accession>Q1HKD2</accession>
<accession>Q1HKE5</accession>
<accession>Q3L6Y3</accession>
<protein>
    <recommendedName>
        <fullName>NADH-ubiquinone oxidoreductase chain 5</fullName>
        <ecNumber evidence="1">7.1.1.2</ecNumber>
    </recommendedName>
    <alternativeName>
        <fullName>NADH dehydrogenase subunit 5</fullName>
    </alternativeName>
</protein>
<comment type="function">
    <text evidence="1">Core subunit of the mitochondrial membrane respiratory chain NADH dehydrogenase (Complex I) which catalyzes electron transfer from NADH through the respiratory chain, using ubiquinone as an electron acceptor. Essential for the catalytic activity and assembly of complex I.</text>
</comment>
<comment type="catalytic activity">
    <reaction evidence="1">
        <text>a ubiquinone + NADH + 5 H(+)(in) = a ubiquinol + NAD(+) + 4 H(+)(out)</text>
        <dbReference type="Rhea" id="RHEA:29091"/>
        <dbReference type="Rhea" id="RHEA-COMP:9565"/>
        <dbReference type="Rhea" id="RHEA-COMP:9566"/>
        <dbReference type="ChEBI" id="CHEBI:15378"/>
        <dbReference type="ChEBI" id="CHEBI:16389"/>
        <dbReference type="ChEBI" id="CHEBI:17976"/>
        <dbReference type="ChEBI" id="CHEBI:57540"/>
        <dbReference type="ChEBI" id="CHEBI:57945"/>
        <dbReference type="EC" id="7.1.1.2"/>
    </reaction>
</comment>
<comment type="subunit">
    <text evidence="2">Core subunit of respiratory chain NADH dehydrogenase (Complex I) which is composed of 45 different subunits.</text>
</comment>
<comment type="subcellular location">
    <subcellularLocation>
        <location evidence="2">Mitochondrion inner membrane</location>
        <topology evidence="3">Multi-pass membrane protein</topology>
    </subcellularLocation>
</comment>
<comment type="similarity">
    <text evidence="5">Belongs to the complex I subunit 5 family.</text>
</comment>
<comment type="sequence caution" evidence="5">
    <conflict type="erroneous initiation">
        <sequence resource="EMBL-CDS" id="AAU00451"/>
    </conflict>
</comment>
<geneLocation type="mitochondrion"/>
<evidence type="ECO:0000250" key="1">
    <source>
        <dbReference type="UniProtKB" id="P03915"/>
    </source>
</evidence>
<evidence type="ECO:0000250" key="2">
    <source>
        <dbReference type="UniProtKB" id="P03920"/>
    </source>
</evidence>
<evidence type="ECO:0000255" key="3"/>
<evidence type="ECO:0000269" key="4">
    <source>
    </source>
</evidence>
<evidence type="ECO:0000305" key="5"/>
<sequence>MNMFSSCMITALVILTLPIIMSSTKLYKNKLYPYYVKTATSYAFMISMIPTMMFIYSGQETIISNWHWMTIQTMKLSMSFKLDYFSMIFVPVALFVTWSIMEFSMWYMHSDPYINRFFKYLLLFLITMMVLVTANNMFQLFIGWEGVGIMSFLLIGWWYGRTDANTAALQAVLYNRIGDVGFIMTMAWFLLNLNTWDLQQIFITTNDNFNLPLLGLLLAATGKSAQFGLHPWLPSAMEGPTPVSALLHSSTMVVAGVFLLIRFHPLMEHNQTIQTLTLCLGAITTLFTAICALTQNDIKKIVAFSTSSQLGLMMVTIGINQPYLAFLHICTHAFFKAMLFMCSGSIIHSLNDEQDIRKMGGLFKVLPFTTTSLIIGSLALTGMPFLTGFYSKDLIIESANTSNTNAWALLITLVATSLTAAYSTRIMFFALLGQPRFSPMILINENNPLLINSIKRLLIGSVFAGYIISHSITPTTIPQMTMPHYLKMTALAVTILGFILALELNLTTQGLKFNYPSNYFKFSSLLGYYPTIMHRLTPKTSLTISQKSASMLLDSIWLENILPKSISYFQMKSSTLISNQKGLIKLYFLSFMLTMILSLLILNYHG</sequence>
<dbReference type="EC" id="7.1.1.2" evidence="1"/>
<dbReference type="EMBL" id="AY598505">
    <property type="protein sequence ID" value="AAU00451.1"/>
    <property type="status" value="ALT_INIT"/>
    <property type="molecule type" value="Genomic_DNA"/>
</dbReference>
<dbReference type="EMBL" id="DQ480503">
    <property type="protein sequence ID" value="ABE48165.1"/>
    <property type="molecule type" value="Genomic_DNA"/>
</dbReference>
<dbReference type="EMBL" id="DQ480504">
    <property type="protein sequence ID" value="ABE48178.1"/>
    <property type="molecule type" value="Genomic_DNA"/>
</dbReference>
<dbReference type="EMBL" id="DQ480505">
    <property type="protein sequence ID" value="ABE48191.1"/>
    <property type="molecule type" value="Genomic_DNA"/>
</dbReference>
<dbReference type="EMBL" id="DQ480506">
    <property type="protein sequence ID" value="ABE48204.1"/>
    <property type="molecule type" value="Genomic_DNA"/>
</dbReference>
<dbReference type="EMBL" id="DQ480507">
    <property type="protein sequence ID" value="ABE48217.1"/>
    <property type="molecule type" value="Genomic_DNA"/>
</dbReference>
<dbReference type="EMBL" id="DQ480508">
    <property type="protein sequence ID" value="ABE48230.1"/>
    <property type="molecule type" value="Genomic_DNA"/>
</dbReference>
<dbReference type="RefSeq" id="YP_626738.1">
    <property type="nucleotide sequence ID" value="NC_008092.1"/>
</dbReference>
<dbReference type="SMR" id="Q1HK80"/>
<dbReference type="GeneID" id="4097761"/>
<dbReference type="CTD" id="4540"/>
<dbReference type="GO" id="GO:0005743">
    <property type="term" value="C:mitochondrial inner membrane"/>
    <property type="evidence" value="ECO:0000250"/>
    <property type="project" value="UniProtKB"/>
</dbReference>
<dbReference type="GO" id="GO:0008137">
    <property type="term" value="F:NADH dehydrogenase (ubiquinone) activity"/>
    <property type="evidence" value="ECO:0000250"/>
    <property type="project" value="UniProtKB"/>
</dbReference>
<dbReference type="GO" id="GO:0015990">
    <property type="term" value="P:electron transport coupled proton transport"/>
    <property type="evidence" value="ECO:0007669"/>
    <property type="project" value="TreeGrafter"/>
</dbReference>
<dbReference type="GO" id="GO:0006120">
    <property type="term" value="P:mitochondrial electron transport, NADH to ubiquinone"/>
    <property type="evidence" value="ECO:0000250"/>
    <property type="project" value="UniProtKB"/>
</dbReference>
<dbReference type="GO" id="GO:0032981">
    <property type="term" value="P:mitochondrial respiratory chain complex I assembly"/>
    <property type="evidence" value="ECO:0000250"/>
    <property type="project" value="UniProtKB"/>
</dbReference>
<dbReference type="InterPro" id="IPR010934">
    <property type="entry name" value="NADH_DH_su5_C"/>
</dbReference>
<dbReference type="InterPro" id="IPR018393">
    <property type="entry name" value="NADHpl_OxRdtase_5_subgr"/>
</dbReference>
<dbReference type="InterPro" id="IPR001750">
    <property type="entry name" value="ND/Mrp_TM"/>
</dbReference>
<dbReference type="InterPro" id="IPR003945">
    <property type="entry name" value="NU5C-like"/>
</dbReference>
<dbReference type="InterPro" id="IPR001516">
    <property type="entry name" value="Proton_antipo_N"/>
</dbReference>
<dbReference type="NCBIfam" id="TIGR01974">
    <property type="entry name" value="NDH_I_L"/>
    <property type="match status" value="1"/>
</dbReference>
<dbReference type="PANTHER" id="PTHR42829">
    <property type="entry name" value="NADH-UBIQUINONE OXIDOREDUCTASE CHAIN 5"/>
    <property type="match status" value="1"/>
</dbReference>
<dbReference type="PANTHER" id="PTHR42829:SF2">
    <property type="entry name" value="NADH-UBIQUINONE OXIDOREDUCTASE CHAIN 5"/>
    <property type="match status" value="1"/>
</dbReference>
<dbReference type="Pfam" id="PF06455">
    <property type="entry name" value="NADH5_C"/>
    <property type="match status" value="1"/>
</dbReference>
<dbReference type="Pfam" id="PF00361">
    <property type="entry name" value="Proton_antipo_M"/>
    <property type="match status" value="1"/>
</dbReference>
<dbReference type="Pfam" id="PF00662">
    <property type="entry name" value="Proton_antipo_N"/>
    <property type="match status" value="1"/>
</dbReference>
<dbReference type="PRINTS" id="PR01434">
    <property type="entry name" value="NADHDHGNASE5"/>
</dbReference>